<protein>
    <recommendedName>
        <fullName evidence="1">Transcription factor FapR</fullName>
    </recommendedName>
    <alternativeName>
        <fullName evidence="1">Fatty acid and phospholipid biosynthesis regulator</fullName>
    </alternativeName>
</protein>
<proteinExistence type="inferred from homology"/>
<evidence type="ECO:0000255" key="1">
    <source>
        <dbReference type="HAMAP-Rule" id="MF_01814"/>
    </source>
</evidence>
<sequence>MKKRRSKKERQELLQQTIESNPFITDEDLAEKFQVSIQTVRLDRMELSIPELRERIKHVATKQHEEDVKSLPLEEVVGEIIDIELDRHAISIFEVKIEHVFKRNQIARGHHLFAQANSLAVAVIDEELALTAKSTIRYIRPVKLGERVVAKARVEDVENDKGRTVVKVRSFVGEELVFTGTFEMYRSSNYSEEGNNL</sequence>
<dbReference type="EMBL" id="AE016877">
    <property type="protein sequence ID" value="AAP10774.1"/>
    <property type="molecule type" value="Genomic_DNA"/>
</dbReference>
<dbReference type="RefSeq" id="NP_833573.1">
    <property type="nucleotide sequence ID" value="NC_004722.1"/>
</dbReference>
<dbReference type="RefSeq" id="WP_000747348.1">
    <property type="nucleotide sequence ID" value="NZ_CP138336.1"/>
</dbReference>
<dbReference type="SMR" id="Q819V3"/>
<dbReference type="STRING" id="226900.BC_3852"/>
<dbReference type="KEGG" id="bce:BC3852"/>
<dbReference type="PATRIC" id="fig|226900.8.peg.3971"/>
<dbReference type="HOGENOM" id="CLU_095708_0_0_9"/>
<dbReference type="OrthoDB" id="1706183at2"/>
<dbReference type="Proteomes" id="UP000001417">
    <property type="component" value="Chromosome"/>
</dbReference>
<dbReference type="GO" id="GO:0003677">
    <property type="term" value="F:DNA binding"/>
    <property type="evidence" value="ECO:0007669"/>
    <property type="project" value="UniProtKB-KW"/>
</dbReference>
<dbReference type="GO" id="GO:0003700">
    <property type="term" value="F:DNA-binding transcription factor activity"/>
    <property type="evidence" value="ECO:0007669"/>
    <property type="project" value="UniProtKB-UniRule"/>
</dbReference>
<dbReference type="GO" id="GO:0006633">
    <property type="term" value="P:fatty acid biosynthetic process"/>
    <property type="evidence" value="ECO:0007669"/>
    <property type="project" value="UniProtKB-KW"/>
</dbReference>
<dbReference type="GO" id="GO:0045892">
    <property type="term" value="P:negative regulation of DNA-templated transcription"/>
    <property type="evidence" value="ECO:0007669"/>
    <property type="project" value="UniProtKB-UniRule"/>
</dbReference>
<dbReference type="GO" id="GO:0045717">
    <property type="term" value="P:negative regulation of fatty acid biosynthetic process"/>
    <property type="evidence" value="ECO:0007669"/>
    <property type="project" value="UniProtKB-UniRule"/>
</dbReference>
<dbReference type="CDD" id="cd03440">
    <property type="entry name" value="hot_dog"/>
    <property type="match status" value="1"/>
</dbReference>
<dbReference type="Gene3D" id="3.10.129.10">
    <property type="entry name" value="Hotdog Thioesterase"/>
    <property type="match status" value="1"/>
</dbReference>
<dbReference type="Gene3D" id="1.10.10.10">
    <property type="entry name" value="Winged helix-like DNA-binding domain superfamily/Winged helix DNA-binding domain"/>
    <property type="match status" value="1"/>
</dbReference>
<dbReference type="HAMAP" id="MF_01814">
    <property type="entry name" value="Transcrip_fact_FapR"/>
    <property type="match status" value="1"/>
</dbReference>
<dbReference type="InterPro" id="IPR029069">
    <property type="entry name" value="HotDog_dom_sf"/>
</dbReference>
<dbReference type="InterPro" id="IPR006683">
    <property type="entry name" value="Thioestr_dom"/>
</dbReference>
<dbReference type="InterPro" id="IPR017275">
    <property type="entry name" value="Transcription_factor_FapR"/>
</dbReference>
<dbReference type="InterPro" id="IPR036388">
    <property type="entry name" value="WH-like_DNA-bd_sf"/>
</dbReference>
<dbReference type="InterPro" id="IPR036390">
    <property type="entry name" value="WH_DNA-bd_sf"/>
</dbReference>
<dbReference type="NCBIfam" id="NF003359">
    <property type="entry name" value="PRK04424.1"/>
    <property type="match status" value="1"/>
</dbReference>
<dbReference type="Pfam" id="PF03061">
    <property type="entry name" value="4HBT"/>
    <property type="match status" value="1"/>
</dbReference>
<dbReference type="PIRSF" id="PIRSF037733">
    <property type="entry name" value="Transcription_factor_FapR"/>
    <property type="match status" value="1"/>
</dbReference>
<dbReference type="SUPFAM" id="SSF54637">
    <property type="entry name" value="Thioesterase/thiol ester dehydrase-isomerase"/>
    <property type="match status" value="1"/>
</dbReference>
<dbReference type="SUPFAM" id="SSF46785">
    <property type="entry name" value="Winged helix' DNA-binding domain"/>
    <property type="match status" value="1"/>
</dbReference>
<gene>
    <name evidence="1" type="primary">fapR</name>
    <name type="ordered locus">BC_3852</name>
</gene>
<reference key="1">
    <citation type="journal article" date="2003" name="Nature">
        <title>Genome sequence of Bacillus cereus and comparative analysis with Bacillus anthracis.</title>
        <authorList>
            <person name="Ivanova N."/>
            <person name="Sorokin A."/>
            <person name="Anderson I."/>
            <person name="Galleron N."/>
            <person name="Candelon B."/>
            <person name="Kapatral V."/>
            <person name="Bhattacharyya A."/>
            <person name="Reznik G."/>
            <person name="Mikhailova N."/>
            <person name="Lapidus A."/>
            <person name="Chu L."/>
            <person name="Mazur M."/>
            <person name="Goltsman E."/>
            <person name="Larsen N."/>
            <person name="D'Souza M."/>
            <person name="Walunas T."/>
            <person name="Grechkin Y."/>
            <person name="Pusch G."/>
            <person name="Haselkorn R."/>
            <person name="Fonstein M."/>
            <person name="Ehrlich S.D."/>
            <person name="Overbeek R."/>
            <person name="Kyrpides N.C."/>
        </authorList>
    </citation>
    <scope>NUCLEOTIDE SEQUENCE [LARGE SCALE GENOMIC DNA]</scope>
    <source>
        <strain>ATCC 14579 / DSM 31 / CCUG 7414 / JCM 2152 / NBRC 15305 / NCIMB 9373 / NCTC 2599 / NRRL B-3711</strain>
    </source>
</reference>
<organism>
    <name type="scientific">Bacillus cereus (strain ATCC 14579 / DSM 31 / CCUG 7414 / JCM 2152 / NBRC 15305 / NCIMB 9373 / NCTC 2599 / NRRL B-3711)</name>
    <dbReference type="NCBI Taxonomy" id="226900"/>
    <lineage>
        <taxon>Bacteria</taxon>
        <taxon>Bacillati</taxon>
        <taxon>Bacillota</taxon>
        <taxon>Bacilli</taxon>
        <taxon>Bacillales</taxon>
        <taxon>Bacillaceae</taxon>
        <taxon>Bacillus</taxon>
        <taxon>Bacillus cereus group</taxon>
    </lineage>
</organism>
<feature type="chain" id="PRO_0000172814" description="Transcription factor FapR">
    <location>
        <begin position="1"/>
        <end position="197"/>
    </location>
</feature>
<comment type="function">
    <text evidence="1">Transcriptional factor involved in regulation of membrane lipid biosynthesis by repressing genes involved in fatty acid and phospholipid metabolism.</text>
</comment>
<comment type="similarity">
    <text evidence="1">Belongs to the FapR family.</text>
</comment>
<name>FAPR_BACCR</name>
<accession>Q819V3</accession>
<keyword id="KW-0238">DNA-binding</keyword>
<keyword id="KW-0275">Fatty acid biosynthesis</keyword>
<keyword id="KW-0276">Fatty acid metabolism</keyword>
<keyword id="KW-0444">Lipid biosynthesis</keyword>
<keyword id="KW-0443">Lipid metabolism</keyword>
<keyword id="KW-1185">Reference proteome</keyword>
<keyword id="KW-0678">Repressor</keyword>
<keyword id="KW-0804">Transcription</keyword>
<keyword id="KW-0805">Transcription regulation</keyword>